<proteinExistence type="inferred from homology"/>
<gene>
    <name evidence="1" type="primary">rplQ</name>
    <name type="ordered locus">SbBS512_E3680</name>
</gene>
<sequence>MRHRKSGRQLNRNSSHRQAMFRNMAGSLVRHEIIKTTLPKAKELRRVVEPLITLAKTDSVANRRLAFARTRDNEIVAKLFNELGPRFASRAGGYTRILKCGFRAGDNAPMAYIELVDRSEKAEAAAE</sequence>
<comment type="subunit">
    <text evidence="1">Part of the 50S ribosomal subunit. Contacts protein L32.</text>
</comment>
<comment type="similarity">
    <text evidence="1">Belongs to the bacterial ribosomal protein bL17 family.</text>
</comment>
<feature type="chain" id="PRO_1000144485" description="Large ribosomal subunit protein bL17">
    <location>
        <begin position="1"/>
        <end position="127"/>
    </location>
</feature>
<dbReference type="EMBL" id="CP001063">
    <property type="protein sequence ID" value="ACD07416.1"/>
    <property type="molecule type" value="Genomic_DNA"/>
</dbReference>
<dbReference type="RefSeq" id="WP_001216368.1">
    <property type="nucleotide sequence ID" value="NC_010658.1"/>
</dbReference>
<dbReference type="SMR" id="B2U2R3"/>
<dbReference type="STRING" id="344609.SbBS512_E3680"/>
<dbReference type="GeneID" id="97442834"/>
<dbReference type="KEGG" id="sbc:SbBS512_E3680"/>
<dbReference type="HOGENOM" id="CLU_074407_2_0_6"/>
<dbReference type="Proteomes" id="UP000001030">
    <property type="component" value="Chromosome"/>
</dbReference>
<dbReference type="GO" id="GO:0022625">
    <property type="term" value="C:cytosolic large ribosomal subunit"/>
    <property type="evidence" value="ECO:0007669"/>
    <property type="project" value="TreeGrafter"/>
</dbReference>
<dbReference type="GO" id="GO:0003735">
    <property type="term" value="F:structural constituent of ribosome"/>
    <property type="evidence" value="ECO:0007669"/>
    <property type="project" value="InterPro"/>
</dbReference>
<dbReference type="GO" id="GO:0006412">
    <property type="term" value="P:translation"/>
    <property type="evidence" value="ECO:0007669"/>
    <property type="project" value="UniProtKB-UniRule"/>
</dbReference>
<dbReference type="FunFam" id="3.90.1030.10:FF:000001">
    <property type="entry name" value="50S ribosomal protein L17"/>
    <property type="match status" value="1"/>
</dbReference>
<dbReference type="Gene3D" id="3.90.1030.10">
    <property type="entry name" value="Ribosomal protein L17"/>
    <property type="match status" value="1"/>
</dbReference>
<dbReference type="HAMAP" id="MF_01368">
    <property type="entry name" value="Ribosomal_bL17"/>
    <property type="match status" value="1"/>
</dbReference>
<dbReference type="InterPro" id="IPR000456">
    <property type="entry name" value="Ribosomal_bL17"/>
</dbReference>
<dbReference type="InterPro" id="IPR047859">
    <property type="entry name" value="Ribosomal_bL17_CS"/>
</dbReference>
<dbReference type="InterPro" id="IPR036373">
    <property type="entry name" value="Ribosomal_bL17_sf"/>
</dbReference>
<dbReference type="NCBIfam" id="TIGR00059">
    <property type="entry name" value="L17"/>
    <property type="match status" value="1"/>
</dbReference>
<dbReference type="PANTHER" id="PTHR14413:SF16">
    <property type="entry name" value="LARGE RIBOSOMAL SUBUNIT PROTEIN BL17M"/>
    <property type="match status" value="1"/>
</dbReference>
<dbReference type="PANTHER" id="PTHR14413">
    <property type="entry name" value="RIBOSOMAL PROTEIN L17"/>
    <property type="match status" value="1"/>
</dbReference>
<dbReference type="Pfam" id="PF01196">
    <property type="entry name" value="Ribosomal_L17"/>
    <property type="match status" value="1"/>
</dbReference>
<dbReference type="SUPFAM" id="SSF64263">
    <property type="entry name" value="Prokaryotic ribosomal protein L17"/>
    <property type="match status" value="1"/>
</dbReference>
<dbReference type="PROSITE" id="PS01167">
    <property type="entry name" value="RIBOSOMAL_L17"/>
    <property type="match status" value="1"/>
</dbReference>
<reference key="1">
    <citation type="submission" date="2008-05" db="EMBL/GenBank/DDBJ databases">
        <title>Complete sequence of Shigella boydii serotype 18 strain BS512.</title>
        <authorList>
            <person name="Rasko D.A."/>
            <person name="Rosovitz M."/>
            <person name="Maurelli A.T."/>
            <person name="Myers G."/>
            <person name="Seshadri R."/>
            <person name="Cer R."/>
            <person name="Jiang L."/>
            <person name="Ravel J."/>
            <person name="Sebastian Y."/>
        </authorList>
    </citation>
    <scope>NUCLEOTIDE SEQUENCE [LARGE SCALE GENOMIC DNA]</scope>
    <source>
        <strain>CDC 3083-94 / BS512</strain>
    </source>
</reference>
<name>RL17_SHIB3</name>
<organism>
    <name type="scientific">Shigella boydii serotype 18 (strain CDC 3083-94 / BS512)</name>
    <dbReference type="NCBI Taxonomy" id="344609"/>
    <lineage>
        <taxon>Bacteria</taxon>
        <taxon>Pseudomonadati</taxon>
        <taxon>Pseudomonadota</taxon>
        <taxon>Gammaproteobacteria</taxon>
        <taxon>Enterobacterales</taxon>
        <taxon>Enterobacteriaceae</taxon>
        <taxon>Shigella</taxon>
    </lineage>
</organism>
<protein>
    <recommendedName>
        <fullName evidence="1">Large ribosomal subunit protein bL17</fullName>
    </recommendedName>
    <alternativeName>
        <fullName evidence="2">50S ribosomal protein L17</fullName>
    </alternativeName>
</protein>
<keyword id="KW-1185">Reference proteome</keyword>
<keyword id="KW-0687">Ribonucleoprotein</keyword>
<keyword id="KW-0689">Ribosomal protein</keyword>
<accession>B2U2R3</accession>
<evidence type="ECO:0000255" key="1">
    <source>
        <dbReference type="HAMAP-Rule" id="MF_01368"/>
    </source>
</evidence>
<evidence type="ECO:0000305" key="2"/>